<name>VPS73_YEAST</name>
<dbReference type="EMBL" id="Z72626">
    <property type="protein sequence ID" value="CAA96811.1"/>
    <property type="molecule type" value="Genomic_DNA"/>
</dbReference>
<dbReference type="EMBL" id="Z72625">
    <property type="protein sequence ID" value="CAA96810.1"/>
    <property type="molecule type" value="Genomic_DNA"/>
</dbReference>
<dbReference type="EMBL" id="X97644">
    <property type="protein sequence ID" value="CAA66249.1"/>
    <property type="molecule type" value="Genomic_DNA"/>
</dbReference>
<dbReference type="EMBL" id="BK006941">
    <property type="protein sequence ID" value="DAA08003.1"/>
    <property type="molecule type" value="Genomic_DNA"/>
</dbReference>
<dbReference type="PIR" id="S64111">
    <property type="entry name" value="S64111"/>
</dbReference>
<dbReference type="RefSeq" id="NP_011411.3">
    <property type="nucleotide sequence ID" value="NM_001180969.3"/>
</dbReference>
<dbReference type="SMR" id="P53142"/>
<dbReference type="BioGRID" id="33146">
    <property type="interactions" value="84"/>
</dbReference>
<dbReference type="DIP" id="DIP-1727N"/>
<dbReference type="FunCoup" id="P53142">
    <property type="interactions" value="1014"/>
</dbReference>
<dbReference type="IntAct" id="P53142">
    <property type="interactions" value="10"/>
</dbReference>
<dbReference type="MINT" id="P53142"/>
<dbReference type="STRING" id="4932.YGL104C"/>
<dbReference type="TCDB" id="2.A.1.1.93">
    <property type="family name" value="the major facilitator superfamily (mfs)"/>
</dbReference>
<dbReference type="iPTMnet" id="P53142"/>
<dbReference type="PaxDb" id="4932-YGL104C"/>
<dbReference type="PeptideAtlas" id="P53142"/>
<dbReference type="EnsemblFungi" id="YGL104C_mRNA">
    <property type="protein sequence ID" value="YGL104C"/>
    <property type="gene ID" value="YGL104C"/>
</dbReference>
<dbReference type="GeneID" id="852774"/>
<dbReference type="KEGG" id="sce:YGL104C"/>
<dbReference type="AGR" id="SGD:S000003072"/>
<dbReference type="SGD" id="S000003072">
    <property type="gene designation" value="VPS73"/>
</dbReference>
<dbReference type="VEuPathDB" id="FungiDB:YGL104C"/>
<dbReference type="eggNOG" id="KOG0569">
    <property type="taxonomic scope" value="Eukaryota"/>
</dbReference>
<dbReference type="GeneTree" id="ENSGT00940000166877"/>
<dbReference type="HOGENOM" id="CLU_001265_30_5_1"/>
<dbReference type="InParanoid" id="P53142"/>
<dbReference type="OMA" id="SYRWRWI"/>
<dbReference type="OrthoDB" id="4540492at2759"/>
<dbReference type="BioCyc" id="YEAST:G3O-30603-MONOMER"/>
<dbReference type="Reactome" id="R-SCE-189200">
    <property type="pathway name" value="Cellular hexose transport"/>
</dbReference>
<dbReference type="Reactome" id="R-SCE-196836">
    <property type="pathway name" value="Vitamin C (ascorbate) metabolism"/>
</dbReference>
<dbReference type="Reactome" id="R-SCE-422356">
    <property type="pathway name" value="Regulation of insulin secretion"/>
</dbReference>
<dbReference type="Reactome" id="R-SCE-5653890">
    <property type="pathway name" value="Lactose synthesis"/>
</dbReference>
<dbReference type="Reactome" id="R-SCE-6798695">
    <property type="pathway name" value="Neutrophil degranulation"/>
</dbReference>
<dbReference type="Reactome" id="R-SCE-8981373">
    <property type="pathway name" value="Intestinal hexose absorption"/>
</dbReference>
<dbReference type="BioGRID-ORCS" id="852774">
    <property type="hits" value="0 hits in 10 CRISPR screens"/>
</dbReference>
<dbReference type="PRO" id="PR:P53142"/>
<dbReference type="Proteomes" id="UP000002311">
    <property type="component" value="Chromosome VII"/>
</dbReference>
<dbReference type="RNAct" id="P53142">
    <property type="molecule type" value="protein"/>
</dbReference>
<dbReference type="GO" id="GO:0000329">
    <property type="term" value="C:fungal-type vacuole membrane"/>
    <property type="evidence" value="ECO:0007005"/>
    <property type="project" value="SGD"/>
</dbReference>
<dbReference type="GO" id="GO:0016020">
    <property type="term" value="C:membrane"/>
    <property type="evidence" value="ECO:0000318"/>
    <property type="project" value="GO_Central"/>
</dbReference>
<dbReference type="GO" id="GO:0031966">
    <property type="term" value="C:mitochondrial membrane"/>
    <property type="evidence" value="ECO:0007669"/>
    <property type="project" value="UniProtKB-SubCell"/>
</dbReference>
<dbReference type="GO" id="GO:0005739">
    <property type="term" value="C:mitochondrion"/>
    <property type="evidence" value="ECO:0007005"/>
    <property type="project" value="SGD"/>
</dbReference>
<dbReference type="GO" id="GO:0015149">
    <property type="term" value="F:hexose transmembrane transporter activity"/>
    <property type="evidence" value="ECO:0000318"/>
    <property type="project" value="GO_Central"/>
</dbReference>
<dbReference type="GO" id="GO:0022857">
    <property type="term" value="F:transmembrane transporter activity"/>
    <property type="evidence" value="ECO:0000250"/>
    <property type="project" value="SGD"/>
</dbReference>
<dbReference type="GO" id="GO:0015749">
    <property type="term" value="P:monosaccharide transmembrane transport"/>
    <property type="evidence" value="ECO:0000318"/>
    <property type="project" value="GO_Central"/>
</dbReference>
<dbReference type="GO" id="GO:0006623">
    <property type="term" value="P:protein targeting to vacuole"/>
    <property type="evidence" value="ECO:0007001"/>
    <property type="project" value="SGD"/>
</dbReference>
<dbReference type="GO" id="GO:0055085">
    <property type="term" value="P:transmembrane transport"/>
    <property type="evidence" value="ECO:0000250"/>
    <property type="project" value="SGD"/>
</dbReference>
<dbReference type="CDD" id="cd17357">
    <property type="entry name" value="MFS_GLUT_Class1_2_like"/>
    <property type="match status" value="1"/>
</dbReference>
<dbReference type="FunFam" id="1.20.1250.20:FF:000755">
    <property type="entry name" value="Vacuolar sorting protein"/>
    <property type="match status" value="1"/>
</dbReference>
<dbReference type="Gene3D" id="1.20.1250.20">
    <property type="entry name" value="MFS general substrate transporter like domains"/>
    <property type="match status" value="1"/>
</dbReference>
<dbReference type="InterPro" id="IPR045263">
    <property type="entry name" value="GLUT"/>
</dbReference>
<dbReference type="InterPro" id="IPR020846">
    <property type="entry name" value="MFS_dom"/>
</dbReference>
<dbReference type="InterPro" id="IPR005828">
    <property type="entry name" value="MFS_sugar_transport-like"/>
</dbReference>
<dbReference type="InterPro" id="IPR036259">
    <property type="entry name" value="MFS_trans_sf"/>
</dbReference>
<dbReference type="InterPro" id="IPR003663">
    <property type="entry name" value="Sugar/inositol_transpt"/>
</dbReference>
<dbReference type="PANTHER" id="PTHR23503:SF8">
    <property type="entry name" value="FACILITATED GLUCOSE TRANSPORTER PROTEIN 1"/>
    <property type="match status" value="1"/>
</dbReference>
<dbReference type="PANTHER" id="PTHR23503">
    <property type="entry name" value="SOLUTE CARRIER FAMILY 2"/>
    <property type="match status" value="1"/>
</dbReference>
<dbReference type="Pfam" id="PF00083">
    <property type="entry name" value="Sugar_tr"/>
    <property type="match status" value="1"/>
</dbReference>
<dbReference type="PRINTS" id="PR00171">
    <property type="entry name" value="SUGRTRNSPORT"/>
</dbReference>
<dbReference type="SUPFAM" id="SSF103473">
    <property type="entry name" value="MFS general substrate transporter"/>
    <property type="match status" value="1"/>
</dbReference>
<dbReference type="PROSITE" id="PS50850">
    <property type="entry name" value="MFS"/>
    <property type="match status" value="1"/>
</dbReference>
<comment type="function">
    <text evidence="2">May be involved in vacuolar protein sorting.</text>
</comment>
<comment type="subcellular location">
    <subcellularLocation>
        <location evidence="3">Mitochondrion membrane</location>
        <topology evidence="3">Multi-pass membrane protein</topology>
    </subcellularLocation>
</comment>
<comment type="similarity">
    <text evidence="4">Belongs to the major facilitator superfamily. Sugar transporter (TC 2.A.1.1) family.</text>
</comment>
<protein>
    <recommendedName>
        <fullName>Vacuolar protein sorting-associated protein 73</fullName>
    </recommendedName>
</protein>
<feature type="chain" id="PRO_0000050462" description="Vacuolar protein sorting-associated protein 73">
    <location>
        <begin position="1"/>
        <end position="486"/>
    </location>
</feature>
<feature type="topological domain" description="Cytoplasmic" evidence="1">
    <location>
        <begin position="1"/>
        <end position="26"/>
    </location>
</feature>
<feature type="transmembrane region" description="Helical; Name=1" evidence="1">
    <location>
        <begin position="27"/>
        <end position="47"/>
    </location>
</feature>
<feature type="topological domain" description="Mitochondrial intermembrane" evidence="1">
    <location>
        <begin position="48"/>
        <end position="90"/>
    </location>
</feature>
<feature type="transmembrane region" description="Helical; Name=2" evidence="1">
    <location>
        <begin position="91"/>
        <end position="111"/>
    </location>
</feature>
<feature type="topological domain" description="Cytoplasmic" evidence="1">
    <location>
        <begin position="112"/>
        <end position="119"/>
    </location>
</feature>
<feature type="transmembrane region" description="Helical; Name=3" evidence="1">
    <location>
        <begin position="120"/>
        <end position="140"/>
    </location>
</feature>
<feature type="topological domain" description="Mitochondrial intermembrane" evidence="1">
    <location>
        <begin position="141"/>
        <end position="146"/>
    </location>
</feature>
<feature type="transmembrane region" description="Helical; Name=4" evidence="1">
    <location>
        <begin position="147"/>
        <end position="167"/>
    </location>
</feature>
<feature type="topological domain" description="Cytoplasmic" evidence="1">
    <location>
        <begin position="168"/>
        <end position="178"/>
    </location>
</feature>
<feature type="transmembrane region" description="Helical; Name=5" evidence="1">
    <location>
        <begin position="179"/>
        <end position="199"/>
    </location>
</feature>
<feature type="topological domain" description="Mitochondrial intermembrane" evidence="1">
    <location>
        <begin position="200"/>
        <end position="208"/>
    </location>
</feature>
<feature type="transmembrane region" description="Helical; Name=6" evidence="1">
    <location>
        <begin position="209"/>
        <end position="229"/>
    </location>
</feature>
<feature type="topological domain" description="Cytoplasmic" evidence="1">
    <location>
        <begin position="230"/>
        <end position="305"/>
    </location>
</feature>
<feature type="transmembrane region" description="Helical; Name=7" evidence="1">
    <location>
        <begin position="306"/>
        <end position="326"/>
    </location>
</feature>
<feature type="topological domain" description="Mitochondrial intermembrane" evidence="1">
    <location>
        <begin position="327"/>
        <end position="342"/>
    </location>
</feature>
<feature type="transmembrane region" description="Helical; Name=8" evidence="1">
    <location>
        <begin position="343"/>
        <end position="363"/>
    </location>
</feature>
<feature type="topological domain" description="Cytoplasmic" evidence="1">
    <location>
        <begin position="364"/>
        <end position="366"/>
    </location>
</feature>
<feature type="transmembrane region" description="Helical; Name=9" evidence="1">
    <location>
        <begin position="367"/>
        <end position="387"/>
    </location>
</feature>
<feature type="topological domain" description="Mitochondrial intermembrane" evidence="1">
    <location>
        <begin position="388"/>
        <end position="396"/>
    </location>
</feature>
<feature type="transmembrane region" description="Helical; Name=10" evidence="1">
    <location>
        <begin position="397"/>
        <end position="417"/>
    </location>
</feature>
<feature type="topological domain" description="Cytoplasmic" evidence="1">
    <location>
        <begin position="418"/>
        <end position="432"/>
    </location>
</feature>
<feature type="transmembrane region" description="Helical; Name=11" evidence="1">
    <location>
        <begin position="433"/>
        <end position="453"/>
    </location>
</feature>
<feature type="topological domain" description="Mitochondrial intermembrane" evidence="1">
    <location>
        <position position="454"/>
    </location>
</feature>
<feature type="transmembrane region" description="Helical; Name=12" evidence="1">
    <location>
        <begin position="455"/>
        <end position="475"/>
    </location>
</feature>
<feature type="topological domain" description="Cytoplasmic" evidence="1">
    <location>
        <begin position="476"/>
        <end position="486"/>
    </location>
</feature>
<organism>
    <name type="scientific">Saccharomyces cerevisiae (strain ATCC 204508 / S288c)</name>
    <name type="common">Baker's yeast</name>
    <dbReference type="NCBI Taxonomy" id="559292"/>
    <lineage>
        <taxon>Eukaryota</taxon>
        <taxon>Fungi</taxon>
        <taxon>Dikarya</taxon>
        <taxon>Ascomycota</taxon>
        <taxon>Saccharomycotina</taxon>
        <taxon>Saccharomycetes</taxon>
        <taxon>Saccharomycetales</taxon>
        <taxon>Saccharomycetaceae</taxon>
        <taxon>Saccharomyces</taxon>
    </lineage>
</organism>
<accession>P53142</accession>
<accession>D6VU42</accession>
<evidence type="ECO:0000255" key="1"/>
<evidence type="ECO:0000269" key="2">
    <source>
    </source>
</evidence>
<evidence type="ECO:0000269" key="3">
    <source>
    </source>
</evidence>
<evidence type="ECO:0000305" key="4"/>
<reference key="1">
    <citation type="journal article" date="1997" name="Nature">
        <title>The nucleotide sequence of Saccharomyces cerevisiae chromosome VII.</title>
        <authorList>
            <person name="Tettelin H."/>
            <person name="Agostoni-Carbone M.L."/>
            <person name="Albermann K."/>
            <person name="Albers M."/>
            <person name="Arroyo J."/>
            <person name="Backes U."/>
            <person name="Barreiros T."/>
            <person name="Bertani I."/>
            <person name="Bjourson A.J."/>
            <person name="Brueckner M."/>
            <person name="Bruschi C.V."/>
            <person name="Carignani G."/>
            <person name="Castagnoli L."/>
            <person name="Cerdan E."/>
            <person name="Clemente M.L."/>
            <person name="Coblenz A."/>
            <person name="Coglievina M."/>
            <person name="Coissac E."/>
            <person name="Defoor E."/>
            <person name="Del Bino S."/>
            <person name="Delius H."/>
            <person name="Delneri D."/>
            <person name="de Wergifosse P."/>
            <person name="Dujon B."/>
            <person name="Durand P."/>
            <person name="Entian K.-D."/>
            <person name="Eraso P."/>
            <person name="Escribano V."/>
            <person name="Fabiani L."/>
            <person name="Fartmann B."/>
            <person name="Feroli F."/>
            <person name="Feuermann M."/>
            <person name="Frontali L."/>
            <person name="Garcia-Gonzalez M."/>
            <person name="Garcia-Saez M.I."/>
            <person name="Goffeau A."/>
            <person name="Guerreiro P."/>
            <person name="Hani J."/>
            <person name="Hansen M."/>
            <person name="Hebling U."/>
            <person name="Hernandez K."/>
            <person name="Heumann K."/>
            <person name="Hilger F."/>
            <person name="Hofmann B."/>
            <person name="Indge K.J."/>
            <person name="James C.M."/>
            <person name="Klima R."/>
            <person name="Koetter P."/>
            <person name="Kramer B."/>
            <person name="Kramer W."/>
            <person name="Lauquin G."/>
            <person name="Leuther H."/>
            <person name="Louis E.J."/>
            <person name="Maillier E."/>
            <person name="Marconi A."/>
            <person name="Martegani E."/>
            <person name="Mazon M.J."/>
            <person name="Mazzoni C."/>
            <person name="McReynolds A.D.K."/>
            <person name="Melchioretto P."/>
            <person name="Mewes H.-W."/>
            <person name="Minenkova O."/>
            <person name="Mueller-Auer S."/>
            <person name="Nawrocki A."/>
            <person name="Netter P."/>
            <person name="Neu R."/>
            <person name="Nombela C."/>
            <person name="Oliver S.G."/>
            <person name="Panzeri L."/>
            <person name="Paoluzi S."/>
            <person name="Plevani P."/>
            <person name="Portetelle D."/>
            <person name="Portillo F."/>
            <person name="Potier S."/>
            <person name="Purnelle B."/>
            <person name="Rieger M."/>
            <person name="Riles L."/>
            <person name="Rinaldi T."/>
            <person name="Robben J."/>
            <person name="Rodrigues-Pousada C."/>
            <person name="Rodriguez-Belmonte E."/>
            <person name="Rodriguez-Torres A.M."/>
            <person name="Rose M."/>
            <person name="Ruzzi M."/>
            <person name="Saliola M."/>
            <person name="Sanchez-Perez M."/>
            <person name="Schaefer B."/>
            <person name="Schaefer M."/>
            <person name="Scharfe M."/>
            <person name="Schmidheini T."/>
            <person name="Schreer A."/>
            <person name="Skala J."/>
            <person name="Souciet J.-L."/>
            <person name="Steensma H.Y."/>
            <person name="Talla E."/>
            <person name="Thierry A."/>
            <person name="Vandenbol M."/>
            <person name="van der Aart Q.J.M."/>
            <person name="Van Dyck L."/>
            <person name="Vanoni M."/>
            <person name="Verhasselt P."/>
            <person name="Voet M."/>
            <person name="Volckaert G."/>
            <person name="Wambutt R."/>
            <person name="Watson M.D."/>
            <person name="Weber N."/>
            <person name="Wedler E."/>
            <person name="Wedler H."/>
            <person name="Wipfli P."/>
            <person name="Wolf K."/>
            <person name="Wright L.F."/>
            <person name="Zaccaria P."/>
            <person name="Zimmermann M."/>
            <person name="Zollner A."/>
            <person name="Kleine K."/>
        </authorList>
    </citation>
    <scope>NUCLEOTIDE SEQUENCE [LARGE SCALE GENOMIC DNA]</scope>
    <source>
        <strain>ATCC 204508 / S288c</strain>
    </source>
</reference>
<reference key="2">
    <citation type="journal article" date="2014" name="G3 (Bethesda)">
        <title>The reference genome sequence of Saccharomyces cerevisiae: Then and now.</title>
        <authorList>
            <person name="Engel S.R."/>
            <person name="Dietrich F.S."/>
            <person name="Fisk D.G."/>
            <person name="Binkley G."/>
            <person name="Balakrishnan R."/>
            <person name="Costanzo M.C."/>
            <person name="Dwight S.S."/>
            <person name="Hitz B.C."/>
            <person name="Karra K."/>
            <person name="Nash R.S."/>
            <person name="Weng S."/>
            <person name="Wong E.D."/>
            <person name="Lloyd P."/>
            <person name="Skrzypek M.S."/>
            <person name="Miyasato S.R."/>
            <person name="Simison M."/>
            <person name="Cherry J.M."/>
        </authorList>
    </citation>
    <scope>GENOME REANNOTATION</scope>
    <source>
        <strain>ATCC 204508 / S288c</strain>
    </source>
</reference>
<reference key="3">
    <citation type="journal article" date="1997" name="Yeast">
        <title>Sequence analysis of 203 kilobases from Saccharomyces cerevisiae chromosome VII.</title>
        <authorList>
            <person name="Rieger M."/>
            <person name="Brueckner M."/>
            <person name="Schaefer M."/>
            <person name="Mueller-Auer S."/>
        </authorList>
    </citation>
    <scope>NUCLEOTIDE SEQUENCE [GENOMIC DNA] OF 1-151</scope>
    <source>
        <strain>ATCC 204508 / S288c</strain>
    </source>
</reference>
<reference key="4">
    <citation type="journal article" date="1997" name="Yeast">
        <title>The genes encoding the transcription factor yTAFII60, the G4p1 protein and a putative glucose transporter are contained in a 12.3 kb DNA fragment on the left arm of Saccharomyces cerevisiae chromosome VII.</title>
        <authorList>
            <person name="Paoluzi S."/>
            <person name="Minenkova O."/>
            <person name="Castagnoli L."/>
        </authorList>
    </citation>
    <scope>NUCLEOTIDE SEQUENCE [GENOMIC DNA] OF 150-486</scope>
</reference>
<reference key="5">
    <citation type="journal article" date="2002" name="Mol. Biol. Cell">
        <title>Genomic screen for vacuolar protein sorting genes in Saccharomyces cerevisiae.</title>
        <authorList>
            <person name="Bonangelino C.J."/>
            <person name="Chavez E.M."/>
            <person name="Bonifacino J.S."/>
        </authorList>
    </citation>
    <scope>FUNCTION</scope>
</reference>
<reference key="6">
    <citation type="journal article" date="2003" name="Proc. Natl. Acad. Sci. U.S.A.">
        <title>The proteome of Saccharomyces cerevisiae mitochondria.</title>
        <authorList>
            <person name="Sickmann A."/>
            <person name="Reinders J."/>
            <person name="Wagner Y."/>
            <person name="Joppich C."/>
            <person name="Zahedi R.P."/>
            <person name="Meyer H.E."/>
            <person name="Schoenfisch B."/>
            <person name="Perschil I."/>
            <person name="Chacinska A."/>
            <person name="Guiard B."/>
            <person name="Rehling P."/>
            <person name="Pfanner N."/>
            <person name="Meisinger C."/>
        </authorList>
    </citation>
    <scope>SUBCELLULAR LOCATION [LARGE SCALE ANALYSIS]</scope>
    <source>
        <strain>ATCC 76625 / YPH499</strain>
    </source>
</reference>
<reference key="7">
    <citation type="journal article" date="2006" name="Proc. Natl. Acad. Sci. U.S.A.">
        <title>A global topology map of the Saccharomyces cerevisiae membrane proteome.</title>
        <authorList>
            <person name="Kim H."/>
            <person name="Melen K."/>
            <person name="Oesterberg M."/>
            <person name="von Heijne G."/>
        </authorList>
    </citation>
    <scope>TOPOLOGY [LARGE SCALE ANALYSIS]</scope>
    <source>
        <strain>ATCC 208353 / W303-1A</strain>
    </source>
</reference>
<reference key="8">
    <citation type="journal article" date="2008" name="Mol. Cell. Proteomics">
        <title>A multidimensional chromatography technology for in-depth phosphoproteome analysis.</title>
        <authorList>
            <person name="Albuquerque C.P."/>
            <person name="Smolka M.B."/>
            <person name="Payne S.H."/>
            <person name="Bafna V."/>
            <person name="Eng J."/>
            <person name="Zhou H."/>
        </authorList>
    </citation>
    <scope>IDENTIFICATION BY MASS SPECTROMETRY [LARGE SCALE ANALYSIS]</scope>
</reference>
<reference key="9">
    <citation type="journal article" date="2009" name="Science">
        <title>Global analysis of Cdk1 substrate phosphorylation sites provides insights into evolution.</title>
        <authorList>
            <person name="Holt L.J."/>
            <person name="Tuch B.B."/>
            <person name="Villen J."/>
            <person name="Johnson A.D."/>
            <person name="Gygi S.P."/>
            <person name="Morgan D.O."/>
        </authorList>
    </citation>
    <scope>IDENTIFICATION BY MASS SPECTROMETRY [LARGE SCALE ANALYSIS]</scope>
</reference>
<sequence>MNRILSSASLLSNVSMPRQNKHKITKALCYAIIVASIGSIQFGYHLSELNAPQQVLSCSEFDIPMEGYPYDRTWLGKRGYKQCIPLNDEQIGIVTSVFCIGGILGSYFATSLANIYGRKFSSLINCTLNIVGSLIIFNSNSYRGLIIGRILVGISCGSLIVIIPLFIKEVAPSGWEGLLGSMTQICIRLGVLLTQGIALPLTDSYRWRWILFGSFLIAVLNFFMWFIVDESPKWLLAHGRVTDAKLSLCKLRGVTFDEAAQEIQDWQLQIESGDPLIEPTTTNSISGSNSLWKYLRDRTNVKSRHVITVLLFGQQFCGINSIVLYGTKIISQLYPQHAIRINFFISMVNVLVTILVSLLIHSLPRKPLLMTSTVLVSVTAFIMGIAMNHNKMNLLIVFSFIYMGVFTMGLNPLPFIIMREVSKPQDMVLAQRYGTICNWVGTFIIAYTFPIIHDVLSGYVFIIFAIIACSISAFIWKKVPETKRSG</sequence>
<keyword id="KW-0472">Membrane</keyword>
<keyword id="KW-0496">Mitochondrion</keyword>
<keyword id="KW-0653">Protein transport</keyword>
<keyword id="KW-1185">Reference proteome</keyword>
<keyword id="KW-0677">Repeat</keyword>
<keyword id="KW-0812">Transmembrane</keyword>
<keyword id="KW-1133">Transmembrane helix</keyword>
<keyword id="KW-0813">Transport</keyword>
<gene>
    <name type="primary">VPS73</name>
    <name type="ordered locus">YGL104C</name>
    <name type="ORF">G3090</name>
</gene>
<proteinExistence type="evidence at protein level"/>